<name>COBT_ECOSM</name>
<keyword id="KW-0169">Cobalamin biosynthesis</keyword>
<keyword id="KW-0328">Glycosyltransferase</keyword>
<keyword id="KW-0808">Transferase</keyword>
<accession>B1LPV7</accession>
<proteinExistence type="inferred from homology"/>
<protein>
    <recommendedName>
        <fullName evidence="1">Nicotinate-nucleotide--dimethylbenzimidazole phosphoribosyltransferase</fullName>
        <shortName evidence="1">NN:DBI PRT</shortName>
        <ecNumber evidence="1">2.4.2.21</ecNumber>
    </recommendedName>
    <alternativeName>
        <fullName evidence="1">N(1)-alpha-phosphoribosyltransferase</fullName>
    </alternativeName>
</protein>
<sequence length="359" mass="36890">MQTLADLLNTIPAIDPAAMSRAQRHIDGLLKPVGSLGRLEALAIQLAGMPGLNGIPHVGKKAVLVMCADHGVWEEGVAISPKEVTAIQAENMTRGTTGVCVLAAQAGANVYVIDVGIDTAEPIPGLINMRVARGSGNIASAPAMSRHQAEKLLLDVICYTRELAKNGVTLFGVGELGMANTTPAAAIVSTITGRAPEEVVGIGANLPTDKLANKIDVVRRAITLNQPNPQDGVDVLAKVGGFDLVGMAGVMLGAASCGLPVLLDGFLSYAAALAACQMSPAIKPYLIPSHLSAEKGARIALSHLGLEPFLNMEMRLGEGSGAALAMPIIEAACAIYNNMGELAASNIVLPGNTTSDLNS</sequence>
<feature type="chain" id="PRO_1000118966" description="Nicotinate-nucleotide--dimethylbenzimidazole phosphoribosyltransferase">
    <location>
        <begin position="1"/>
        <end position="359"/>
    </location>
</feature>
<feature type="active site" description="Proton acceptor" evidence="1">
    <location>
        <position position="318"/>
    </location>
</feature>
<gene>
    <name evidence="1" type="primary">cobT</name>
    <name type="ordered locus">EcSMS35_1133</name>
</gene>
<dbReference type="EC" id="2.4.2.21" evidence="1"/>
<dbReference type="EMBL" id="CP000970">
    <property type="protein sequence ID" value="ACB18737.1"/>
    <property type="molecule type" value="Genomic_DNA"/>
</dbReference>
<dbReference type="RefSeq" id="WP_001193797.1">
    <property type="nucleotide sequence ID" value="NC_010498.1"/>
</dbReference>
<dbReference type="SMR" id="B1LPV7"/>
<dbReference type="KEGG" id="ecm:EcSMS35_1133"/>
<dbReference type="HOGENOM" id="CLU_002982_0_0_6"/>
<dbReference type="UniPathway" id="UPA00061">
    <property type="reaction ID" value="UER00516"/>
</dbReference>
<dbReference type="Proteomes" id="UP000007011">
    <property type="component" value="Chromosome"/>
</dbReference>
<dbReference type="GO" id="GO:0008939">
    <property type="term" value="F:nicotinate-nucleotide-dimethylbenzimidazole phosphoribosyltransferase activity"/>
    <property type="evidence" value="ECO:0007669"/>
    <property type="project" value="UniProtKB-UniRule"/>
</dbReference>
<dbReference type="GO" id="GO:0009236">
    <property type="term" value="P:cobalamin biosynthetic process"/>
    <property type="evidence" value="ECO:0007669"/>
    <property type="project" value="UniProtKB-KW"/>
</dbReference>
<dbReference type="CDD" id="cd02439">
    <property type="entry name" value="DMB-PRT_CobT"/>
    <property type="match status" value="1"/>
</dbReference>
<dbReference type="FunFam" id="1.10.1610.10:FF:000001">
    <property type="entry name" value="Nicotinate-nucleotide--dimethylbenzimidazole phosphoribosyltransferase"/>
    <property type="match status" value="1"/>
</dbReference>
<dbReference type="FunFam" id="3.40.50.10210:FF:000001">
    <property type="entry name" value="Nicotinate-nucleotide--dimethylbenzimidazole phosphoribosyltransferase"/>
    <property type="match status" value="1"/>
</dbReference>
<dbReference type="Gene3D" id="1.10.1610.10">
    <property type="match status" value="1"/>
</dbReference>
<dbReference type="Gene3D" id="3.40.50.10210">
    <property type="match status" value="1"/>
</dbReference>
<dbReference type="HAMAP" id="MF_00230">
    <property type="entry name" value="CobT"/>
    <property type="match status" value="1"/>
</dbReference>
<dbReference type="InterPro" id="IPR003200">
    <property type="entry name" value="Nict_dMeBzImd_PRibTrfase"/>
</dbReference>
<dbReference type="InterPro" id="IPR017846">
    <property type="entry name" value="Nict_dMeBzImd_PRibTrfase_bact"/>
</dbReference>
<dbReference type="InterPro" id="IPR023195">
    <property type="entry name" value="Nict_dMeBzImd_PRibTrfase_N"/>
</dbReference>
<dbReference type="InterPro" id="IPR036087">
    <property type="entry name" value="Nict_dMeBzImd_PRibTrfase_sf"/>
</dbReference>
<dbReference type="NCBIfam" id="TIGR03160">
    <property type="entry name" value="cobT_DBIPRT"/>
    <property type="match status" value="1"/>
</dbReference>
<dbReference type="NCBIfam" id="NF000996">
    <property type="entry name" value="PRK00105.1"/>
    <property type="match status" value="1"/>
</dbReference>
<dbReference type="PANTHER" id="PTHR43463">
    <property type="entry name" value="NICOTINATE-NUCLEOTIDE--DIMETHYLBENZIMIDAZOLE PHOSPHORIBOSYLTRANSFERASE"/>
    <property type="match status" value="1"/>
</dbReference>
<dbReference type="PANTHER" id="PTHR43463:SF1">
    <property type="entry name" value="NICOTINATE-NUCLEOTIDE--DIMETHYLBENZIMIDAZOLE PHOSPHORIBOSYLTRANSFERASE"/>
    <property type="match status" value="1"/>
</dbReference>
<dbReference type="Pfam" id="PF02277">
    <property type="entry name" value="DBI_PRT"/>
    <property type="match status" value="1"/>
</dbReference>
<dbReference type="SUPFAM" id="SSF52733">
    <property type="entry name" value="Nicotinate mononucleotide:5,6-dimethylbenzimidazole phosphoribosyltransferase (CobT)"/>
    <property type="match status" value="1"/>
</dbReference>
<comment type="function">
    <text evidence="1">Catalyzes the synthesis of alpha-ribazole-5'-phosphate from nicotinate mononucleotide (NAMN) and 5,6-dimethylbenzimidazole (DMB).</text>
</comment>
<comment type="catalytic activity">
    <reaction evidence="1">
        <text>5,6-dimethylbenzimidazole + nicotinate beta-D-ribonucleotide = alpha-ribazole 5'-phosphate + nicotinate + H(+)</text>
        <dbReference type="Rhea" id="RHEA:11196"/>
        <dbReference type="ChEBI" id="CHEBI:15378"/>
        <dbReference type="ChEBI" id="CHEBI:15890"/>
        <dbReference type="ChEBI" id="CHEBI:32544"/>
        <dbReference type="ChEBI" id="CHEBI:57502"/>
        <dbReference type="ChEBI" id="CHEBI:57918"/>
        <dbReference type="EC" id="2.4.2.21"/>
    </reaction>
</comment>
<comment type="pathway">
    <text evidence="1">Nucleoside biosynthesis; alpha-ribazole biosynthesis; alpha-ribazole from 5,6-dimethylbenzimidazole: step 1/2.</text>
</comment>
<comment type="subunit">
    <text evidence="1">Homodimer.</text>
</comment>
<comment type="similarity">
    <text evidence="1">Belongs to the CobT family.</text>
</comment>
<reference key="1">
    <citation type="journal article" date="2008" name="J. Bacteriol.">
        <title>Insights into the environmental resistance gene pool from the genome sequence of the multidrug-resistant environmental isolate Escherichia coli SMS-3-5.</title>
        <authorList>
            <person name="Fricke W.F."/>
            <person name="Wright M.S."/>
            <person name="Lindell A.H."/>
            <person name="Harkins D.M."/>
            <person name="Baker-Austin C."/>
            <person name="Ravel J."/>
            <person name="Stepanauskas R."/>
        </authorList>
    </citation>
    <scope>NUCLEOTIDE SEQUENCE [LARGE SCALE GENOMIC DNA]</scope>
    <source>
        <strain>SMS-3-5 / SECEC</strain>
    </source>
</reference>
<organism>
    <name type="scientific">Escherichia coli (strain SMS-3-5 / SECEC)</name>
    <dbReference type="NCBI Taxonomy" id="439855"/>
    <lineage>
        <taxon>Bacteria</taxon>
        <taxon>Pseudomonadati</taxon>
        <taxon>Pseudomonadota</taxon>
        <taxon>Gammaproteobacteria</taxon>
        <taxon>Enterobacterales</taxon>
        <taxon>Enterobacteriaceae</taxon>
        <taxon>Escherichia</taxon>
    </lineage>
</organism>
<evidence type="ECO:0000255" key="1">
    <source>
        <dbReference type="HAMAP-Rule" id="MF_00230"/>
    </source>
</evidence>